<dbReference type="EC" id="2.1.1.182" evidence="1"/>
<dbReference type="EMBL" id="AM039952">
    <property type="protein sequence ID" value="CAJ22531.1"/>
    <property type="molecule type" value="Genomic_DNA"/>
</dbReference>
<dbReference type="RefSeq" id="WP_011346479.1">
    <property type="nucleotide sequence ID" value="NZ_CP017190.1"/>
</dbReference>
<dbReference type="SMR" id="Q3BX82"/>
<dbReference type="STRING" id="456327.BJD11_18290"/>
<dbReference type="KEGG" id="xcv:XCV0900"/>
<dbReference type="eggNOG" id="COG0030">
    <property type="taxonomic scope" value="Bacteria"/>
</dbReference>
<dbReference type="HOGENOM" id="CLU_041220_0_1_6"/>
<dbReference type="Proteomes" id="UP000007069">
    <property type="component" value="Chromosome"/>
</dbReference>
<dbReference type="GO" id="GO:0005829">
    <property type="term" value="C:cytosol"/>
    <property type="evidence" value="ECO:0007669"/>
    <property type="project" value="TreeGrafter"/>
</dbReference>
<dbReference type="GO" id="GO:0052908">
    <property type="term" value="F:16S rRNA (adenine(1518)-N(6)/adenine(1519)-N(6))-dimethyltransferase activity"/>
    <property type="evidence" value="ECO:0007669"/>
    <property type="project" value="UniProtKB-EC"/>
</dbReference>
<dbReference type="GO" id="GO:0003723">
    <property type="term" value="F:RNA binding"/>
    <property type="evidence" value="ECO:0007669"/>
    <property type="project" value="UniProtKB-KW"/>
</dbReference>
<dbReference type="FunFam" id="1.10.8.100:FF:000001">
    <property type="entry name" value="Ribosomal RNA small subunit methyltransferase A"/>
    <property type="match status" value="1"/>
</dbReference>
<dbReference type="FunFam" id="3.40.50.150:FF:000222">
    <property type="entry name" value="Ribosomal RNA small subunit methyltransferase A"/>
    <property type="match status" value="1"/>
</dbReference>
<dbReference type="Gene3D" id="1.10.8.100">
    <property type="entry name" value="Ribosomal RNA adenine dimethylase-like, domain 2"/>
    <property type="match status" value="1"/>
</dbReference>
<dbReference type="Gene3D" id="3.40.50.150">
    <property type="entry name" value="Vaccinia Virus protein VP39"/>
    <property type="match status" value="1"/>
</dbReference>
<dbReference type="HAMAP" id="MF_00607">
    <property type="entry name" value="16SrRNA_methyltr_A"/>
    <property type="match status" value="1"/>
</dbReference>
<dbReference type="InterPro" id="IPR001737">
    <property type="entry name" value="KsgA/Erm"/>
</dbReference>
<dbReference type="InterPro" id="IPR023165">
    <property type="entry name" value="rRNA_Ade_diMease-like_C"/>
</dbReference>
<dbReference type="InterPro" id="IPR020596">
    <property type="entry name" value="rRNA_Ade_Mease_Trfase_CS"/>
</dbReference>
<dbReference type="InterPro" id="IPR020598">
    <property type="entry name" value="rRNA_Ade_methylase_Trfase_N"/>
</dbReference>
<dbReference type="InterPro" id="IPR011530">
    <property type="entry name" value="rRNA_adenine_dimethylase"/>
</dbReference>
<dbReference type="InterPro" id="IPR029063">
    <property type="entry name" value="SAM-dependent_MTases_sf"/>
</dbReference>
<dbReference type="NCBIfam" id="TIGR00755">
    <property type="entry name" value="ksgA"/>
    <property type="match status" value="1"/>
</dbReference>
<dbReference type="PANTHER" id="PTHR11727">
    <property type="entry name" value="DIMETHYLADENOSINE TRANSFERASE"/>
    <property type="match status" value="1"/>
</dbReference>
<dbReference type="PANTHER" id="PTHR11727:SF7">
    <property type="entry name" value="DIMETHYLADENOSINE TRANSFERASE-RELATED"/>
    <property type="match status" value="1"/>
</dbReference>
<dbReference type="Pfam" id="PF00398">
    <property type="entry name" value="RrnaAD"/>
    <property type="match status" value="1"/>
</dbReference>
<dbReference type="SMART" id="SM00650">
    <property type="entry name" value="rADc"/>
    <property type="match status" value="1"/>
</dbReference>
<dbReference type="SUPFAM" id="SSF53335">
    <property type="entry name" value="S-adenosyl-L-methionine-dependent methyltransferases"/>
    <property type="match status" value="1"/>
</dbReference>
<dbReference type="PROSITE" id="PS01131">
    <property type="entry name" value="RRNA_A_DIMETH"/>
    <property type="match status" value="1"/>
</dbReference>
<dbReference type="PROSITE" id="PS51689">
    <property type="entry name" value="SAM_RNA_A_N6_MT"/>
    <property type="match status" value="1"/>
</dbReference>
<name>RSMA_XANE5</name>
<protein>
    <recommendedName>
        <fullName evidence="1">Ribosomal RNA small subunit methyltransferase A</fullName>
        <ecNumber evidence="1">2.1.1.182</ecNumber>
    </recommendedName>
    <alternativeName>
        <fullName evidence="1">16S rRNA (adenine(1518)-N(6)/adenine(1519)-N(6))-dimethyltransferase</fullName>
    </alternativeName>
    <alternativeName>
        <fullName evidence="1">16S rRNA dimethyladenosine transferase</fullName>
    </alternativeName>
    <alternativeName>
        <fullName evidence="1">16S rRNA dimethylase</fullName>
    </alternativeName>
    <alternativeName>
        <fullName evidence="1">S-adenosylmethionine-6-N', N'-adenosyl(rRNA) dimethyltransferase</fullName>
    </alternativeName>
</protein>
<organism>
    <name type="scientific">Xanthomonas euvesicatoria pv. vesicatoria (strain 85-10)</name>
    <name type="common">Xanthomonas campestris pv. vesicatoria</name>
    <dbReference type="NCBI Taxonomy" id="316273"/>
    <lineage>
        <taxon>Bacteria</taxon>
        <taxon>Pseudomonadati</taxon>
        <taxon>Pseudomonadota</taxon>
        <taxon>Gammaproteobacteria</taxon>
        <taxon>Lysobacterales</taxon>
        <taxon>Lysobacteraceae</taxon>
        <taxon>Xanthomonas</taxon>
    </lineage>
</organism>
<sequence>MNSSFSAPAKKSLGQHFLADRYYIDRIVQAVDPRAGQHLVEIGPGQGAITFPLLRRHGALTVIEFDRDLIAPLTEVAAPIGALSIIHRDVLSVDFTALANGTPIRLVGNLPYNISSPILFHALDHAAAVADMHFMLQKEVVDRMAAGPGSKVYGRLSVMLQAYCEVTALFVVPPGAFRPPPKVDSAVVRLVPRDPATVQINDRRRFADVVRAGFGQRRKTLRNALSTICEPAHFDAAQVRPDARAEQLEVADFIRLANVELA</sequence>
<proteinExistence type="inferred from homology"/>
<comment type="function">
    <text evidence="1">Specifically dimethylates two adjacent adenosines (A1518 and A1519) in the loop of a conserved hairpin near the 3'-end of 16S rRNA in the 30S particle. May play a critical role in biogenesis of 30S subunits.</text>
</comment>
<comment type="catalytic activity">
    <reaction evidence="1">
        <text>adenosine(1518)/adenosine(1519) in 16S rRNA + 4 S-adenosyl-L-methionine = N(6)-dimethyladenosine(1518)/N(6)-dimethyladenosine(1519) in 16S rRNA + 4 S-adenosyl-L-homocysteine + 4 H(+)</text>
        <dbReference type="Rhea" id="RHEA:19609"/>
        <dbReference type="Rhea" id="RHEA-COMP:10232"/>
        <dbReference type="Rhea" id="RHEA-COMP:10233"/>
        <dbReference type="ChEBI" id="CHEBI:15378"/>
        <dbReference type="ChEBI" id="CHEBI:57856"/>
        <dbReference type="ChEBI" id="CHEBI:59789"/>
        <dbReference type="ChEBI" id="CHEBI:74411"/>
        <dbReference type="ChEBI" id="CHEBI:74493"/>
        <dbReference type="EC" id="2.1.1.182"/>
    </reaction>
</comment>
<comment type="subcellular location">
    <subcellularLocation>
        <location evidence="1">Cytoplasm</location>
    </subcellularLocation>
</comment>
<comment type="similarity">
    <text evidence="1">Belongs to the class I-like SAM-binding methyltransferase superfamily. rRNA adenine N(6)-methyltransferase family. RsmA subfamily.</text>
</comment>
<gene>
    <name evidence="1" type="primary">rsmA</name>
    <name evidence="1" type="synonym">ksgA</name>
    <name type="ordered locus">XCV0900</name>
</gene>
<reference key="1">
    <citation type="journal article" date="2005" name="J. Bacteriol.">
        <title>Insights into genome plasticity and pathogenicity of the plant pathogenic Bacterium Xanthomonas campestris pv. vesicatoria revealed by the complete genome sequence.</title>
        <authorList>
            <person name="Thieme F."/>
            <person name="Koebnik R."/>
            <person name="Bekel T."/>
            <person name="Berger C."/>
            <person name="Boch J."/>
            <person name="Buettner D."/>
            <person name="Caldana C."/>
            <person name="Gaigalat L."/>
            <person name="Goesmann A."/>
            <person name="Kay S."/>
            <person name="Kirchner O."/>
            <person name="Lanz C."/>
            <person name="Linke B."/>
            <person name="McHardy A.C."/>
            <person name="Meyer F."/>
            <person name="Mittenhuber G."/>
            <person name="Nies D.H."/>
            <person name="Niesbach-Kloesgen U."/>
            <person name="Patschkowski T."/>
            <person name="Rueckert C."/>
            <person name="Rupp O."/>
            <person name="Schneiker S."/>
            <person name="Schuster S.C."/>
            <person name="Vorhoelter F.J."/>
            <person name="Weber E."/>
            <person name="Puehler A."/>
            <person name="Bonas U."/>
            <person name="Bartels D."/>
            <person name="Kaiser O."/>
        </authorList>
    </citation>
    <scope>NUCLEOTIDE SEQUENCE [LARGE SCALE GENOMIC DNA]</scope>
    <source>
        <strain>85-10</strain>
    </source>
</reference>
<evidence type="ECO:0000255" key="1">
    <source>
        <dbReference type="HAMAP-Rule" id="MF_00607"/>
    </source>
</evidence>
<feature type="chain" id="PRO_0000257373" description="Ribosomal RNA small subunit methyltransferase A">
    <location>
        <begin position="1"/>
        <end position="262"/>
    </location>
</feature>
<feature type="binding site" evidence="1">
    <location>
        <position position="16"/>
    </location>
    <ligand>
        <name>S-adenosyl-L-methionine</name>
        <dbReference type="ChEBI" id="CHEBI:59789"/>
    </ligand>
</feature>
<feature type="binding site" evidence="1">
    <location>
        <position position="18"/>
    </location>
    <ligand>
        <name>S-adenosyl-L-methionine</name>
        <dbReference type="ChEBI" id="CHEBI:59789"/>
    </ligand>
</feature>
<feature type="binding site" evidence="1">
    <location>
        <position position="43"/>
    </location>
    <ligand>
        <name>S-adenosyl-L-methionine</name>
        <dbReference type="ChEBI" id="CHEBI:59789"/>
    </ligand>
</feature>
<feature type="binding site" evidence="1">
    <location>
        <position position="64"/>
    </location>
    <ligand>
        <name>S-adenosyl-L-methionine</name>
        <dbReference type="ChEBI" id="CHEBI:59789"/>
    </ligand>
</feature>
<feature type="binding site" evidence="1">
    <location>
        <position position="89"/>
    </location>
    <ligand>
        <name>S-adenosyl-L-methionine</name>
        <dbReference type="ChEBI" id="CHEBI:59789"/>
    </ligand>
</feature>
<feature type="binding site" evidence="1">
    <location>
        <position position="109"/>
    </location>
    <ligand>
        <name>S-adenosyl-L-methionine</name>
        <dbReference type="ChEBI" id="CHEBI:59789"/>
    </ligand>
</feature>
<keyword id="KW-0963">Cytoplasm</keyword>
<keyword id="KW-0489">Methyltransferase</keyword>
<keyword id="KW-0694">RNA-binding</keyword>
<keyword id="KW-0698">rRNA processing</keyword>
<keyword id="KW-0949">S-adenosyl-L-methionine</keyword>
<keyword id="KW-0808">Transferase</keyword>
<accession>Q3BX82</accession>